<gene>
    <name type="primary">hmd</name>
    <name type="ordered locus">MJ0784</name>
</gene>
<comment type="function">
    <text evidence="1">Catalyzes the reversible reduction of methenyl-H(4)MPT(+) to methylene-H(4)MPT.</text>
</comment>
<comment type="catalytic activity">
    <reaction>
        <text>5,10-methenyl-5,6,7,8-tetrahydromethanopterin + H2 = 5,10-methylenetetrahydromethanopterin + H(+)</text>
        <dbReference type="Rhea" id="RHEA:20017"/>
        <dbReference type="ChEBI" id="CHEBI:15378"/>
        <dbReference type="ChEBI" id="CHEBI:18276"/>
        <dbReference type="ChEBI" id="CHEBI:57818"/>
        <dbReference type="ChEBI" id="CHEBI:58337"/>
        <dbReference type="EC" id="1.12.98.2"/>
    </reaction>
</comment>
<comment type="pathway">
    <text>One-carbon metabolism; methanogenesis from CO(2); 5,10-methylene-5,6,7,8-tetrahydromethanopterin from 5,10-methenyl-5,6,7,8-tetrahydromethanopterin (hydrogen route): step 1/1.</text>
</comment>
<comment type="similarity">
    <text evidence="2">Belongs to the HMD family.</text>
</comment>
<reference key="1">
    <citation type="journal article" date="1996" name="Science">
        <title>Complete genome sequence of the methanogenic archaeon, Methanococcus jannaschii.</title>
        <authorList>
            <person name="Bult C.J."/>
            <person name="White O."/>
            <person name="Olsen G.J."/>
            <person name="Zhou L."/>
            <person name="Fleischmann R.D."/>
            <person name="Sutton G.G."/>
            <person name="Blake J.A."/>
            <person name="FitzGerald L.M."/>
            <person name="Clayton R.A."/>
            <person name="Gocayne J.D."/>
            <person name="Kerlavage A.R."/>
            <person name="Dougherty B.A."/>
            <person name="Tomb J.-F."/>
            <person name="Adams M.D."/>
            <person name="Reich C.I."/>
            <person name="Overbeek R."/>
            <person name="Kirkness E.F."/>
            <person name="Weinstock K.G."/>
            <person name="Merrick J.M."/>
            <person name="Glodek A."/>
            <person name="Scott J.L."/>
            <person name="Geoghagen N.S.M."/>
            <person name="Weidman J.F."/>
            <person name="Fuhrmann J.L."/>
            <person name="Nguyen D."/>
            <person name="Utterback T.R."/>
            <person name="Kelley J.M."/>
            <person name="Peterson J.D."/>
            <person name="Sadow P.W."/>
            <person name="Hanna M.C."/>
            <person name="Cotton M.D."/>
            <person name="Roberts K.M."/>
            <person name="Hurst M.A."/>
            <person name="Kaine B.P."/>
            <person name="Borodovsky M."/>
            <person name="Klenk H.-P."/>
            <person name="Fraser C.M."/>
            <person name="Smith H.O."/>
            <person name="Woese C.R."/>
            <person name="Venter J.C."/>
        </authorList>
    </citation>
    <scope>NUCLEOTIDE SEQUENCE [LARGE SCALE GENOMIC DNA]</scope>
    <source>
        <strain>ATCC 43067 / DSM 2661 / JAL-1 / JCM 10045 / NBRC 100440</strain>
    </source>
</reference>
<protein>
    <recommendedName>
        <fullName>5,10-methenyltetrahydromethanopterin hydrogenase</fullName>
        <ecNumber>1.12.98.2</ecNumber>
    </recommendedName>
    <alternativeName>
        <fullName>H(2)-dependent methylene-H(4)MPT dehydrogenase</fullName>
    </alternativeName>
    <alternativeName>
        <fullName>H(2)-forming N(5),N(10)-methylenetetrahydromethanopterin dehydrogenase</fullName>
    </alternativeName>
    <alternativeName>
        <fullName>N(5),N(10)-methenyltetrahydromethanopterin hydrogenase</fullName>
    </alternativeName>
</protein>
<name>HMD_METJA</name>
<feature type="chain" id="PRO_0000218508" description="5,10-methenyltetrahydromethanopterin hydrogenase">
    <location>
        <begin position="1"/>
        <end position="358"/>
    </location>
</feature>
<feature type="strand" evidence="3">
    <location>
        <begin position="2"/>
        <end position="6"/>
    </location>
</feature>
<feature type="helix" evidence="3">
    <location>
        <begin position="12"/>
        <end position="17"/>
    </location>
</feature>
<feature type="helix" evidence="3">
    <location>
        <begin position="23"/>
        <end position="32"/>
    </location>
</feature>
<feature type="helix" evidence="3">
    <location>
        <begin position="35"/>
        <end position="39"/>
    </location>
</feature>
<feature type="helix" evidence="3">
    <location>
        <begin position="42"/>
        <end position="53"/>
    </location>
</feature>
<feature type="strand" evidence="3">
    <location>
        <begin position="59"/>
        <end position="63"/>
    </location>
</feature>
<feature type="helix" evidence="3">
    <location>
        <begin position="65"/>
        <end position="68"/>
    </location>
</feature>
<feature type="strand" evidence="3">
    <location>
        <begin position="69"/>
        <end position="75"/>
    </location>
</feature>
<feature type="helix" evidence="3">
    <location>
        <begin position="81"/>
        <end position="89"/>
    </location>
</feature>
<feature type="helix" evidence="3">
    <location>
        <begin position="93"/>
        <end position="95"/>
    </location>
</feature>
<feature type="helix" evidence="3">
    <location>
        <begin position="97"/>
        <end position="109"/>
    </location>
</feature>
<feature type="turn" evidence="3">
    <location>
        <begin position="114"/>
        <end position="116"/>
    </location>
</feature>
<feature type="strand" evidence="3">
    <location>
        <begin position="117"/>
        <end position="122"/>
    </location>
</feature>
<feature type="helix" evidence="3">
    <location>
        <begin position="124"/>
        <end position="127"/>
    </location>
</feature>
<feature type="strand" evidence="3">
    <location>
        <begin position="130"/>
        <end position="133"/>
    </location>
</feature>
<feature type="helix" evidence="3">
    <location>
        <begin position="135"/>
        <end position="139"/>
    </location>
</feature>
<feature type="strand" evidence="3">
    <location>
        <begin position="143"/>
        <end position="147"/>
    </location>
</feature>
<feature type="strand" evidence="4">
    <location>
        <begin position="151"/>
        <end position="154"/>
    </location>
</feature>
<feature type="helix" evidence="3">
    <location>
        <begin position="155"/>
        <end position="162"/>
    </location>
</feature>
<feature type="helix" evidence="3">
    <location>
        <begin position="163"/>
        <end position="165"/>
    </location>
</feature>
<feature type="strand" evidence="3">
    <location>
        <begin position="171"/>
        <end position="174"/>
    </location>
</feature>
<feature type="strand" evidence="3">
    <location>
        <begin position="176"/>
        <end position="178"/>
    </location>
</feature>
<feature type="helix" evidence="3">
    <location>
        <begin position="180"/>
        <end position="189"/>
    </location>
</feature>
<feature type="strand" evidence="3">
    <location>
        <begin position="195"/>
        <end position="199"/>
    </location>
</feature>
<feature type="turn" evidence="3">
    <location>
        <begin position="206"/>
        <end position="208"/>
    </location>
</feature>
<feature type="strand" evidence="3">
    <location>
        <begin position="212"/>
        <end position="219"/>
    </location>
</feature>
<feature type="helix" evidence="3">
    <location>
        <begin position="221"/>
        <end position="235"/>
    </location>
</feature>
<feature type="strand" evidence="3">
    <location>
        <begin position="238"/>
        <end position="242"/>
    </location>
</feature>
<feature type="helix" evidence="3">
    <location>
        <begin position="243"/>
        <end position="245"/>
    </location>
</feature>
<feature type="helix" evidence="3">
    <location>
        <begin position="246"/>
        <end position="250"/>
    </location>
</feature>
<feature type="helix" evidence="3">
    <location>
        <begin position="254"/>
        <end position="272"/>
    </location>
</feature>
<feature type="helix" evidence="3">
    <location>
        <begin position="279"/>
        <end position="300"/>
    </location>
</feature>
<feature type="helix" evidence="3">
    <location>
        <begin position="302"/>
        <end position="304"/>
    </location>
</feature>
<feature type="helix" evidence="3">
    <location>
        <begin position="305"/>
        <end position="308"/>
    </location>
</feature>
<feature type="helix" evidence="3">
    <location>
        <begin position="311"/>
        <end position="316"/>
    </location>
</feature>
<feature type="helix" evidence="3">
    <location>
        <begin position="318"/>
        <end position="321"/>
    </location>
</feature>
<feature type="helix" evidence="3">
    <location>
        <begin position="324"/>
        <end position="326"/>
    </location>
</feature>
<feature type="helix" evidence="3">
    <location>
        <begin position="329"/>
        <end position="339"/>
    </location>
</feature>
<accession>Q58194</accession>
<dbReference type="EC" id="1.12.98.2"/>
<dbReference type="EMBL" id="L77117">
    <property type="protein sequence ID" value="AAB98781.1"/>
    <property type="molecule type" value="Genomic_DNA"/>
</dbReference>
<dbReference type="PIR" id="H64397">
    <property type="entry name" value="H64397"/>
</dbReference>
<dbReference type="RefSeq" id="WP_010870290.1">
    <property type="nucleotide sequence ID" value="NC_000909.1"/>
</dbReference>
<dbReference type="PDB" id="2B0J">
    <property type="method" value="X-ray"/>
    <property type="resolution" value="1.75 A"/>
    <property type="chains" value="A=1-358"/>
</dbReference>
<dbReference type="PDB" id="3DAF">
    <property type="method" value="X-ray"/>
    <property type="resolution" value="1.75 A"/>
    <property type="chains" value="A=1-358"/>
</dbReference>
<dbReference type="PDB" id="3DAG">
    <property type="method" value="X-ray"/>
    <property type="resolution" value="1.75 A"/>
    <property type="chains" value="A=1-358"/>
</dbReference>
<dbReference type="PDB" id="3F46">
    <property type="method" value="X-ray"/>
    <property type="resolution" value="1.95 A"/>
    <property type="chains" value="A=1-358"/>
</dbReference>
<dbReference type="PDB" id="3F47">
    <property type="method" value="X-ray"/>
    <property type="resolution" value="1.75 A"/>
    <property type="chains" value="A=1-358"/>
</dbReference>
<dbReference type="PDB" id="3H65">
    <property type="method" value="X-ray"/>
    <property type="resolution" value="2.15 A"/>
    <property type="chains" value="A=1-358"/>
</dbReference>
<dbReference type="PDBsum" id="2B0J"/>
<dbReference type="PDBsum" id="3DAF"/>
<dbReference type="PDBsum" id="3DAG"/>
<dbReference type="PDBsum" id="3F46"/>
<dbReference type="PDBsum" id="3F47"/>
<dbReference type="PDBsum" id="3H65"/>
<dbReference type="SMR" id="Q58194"/>
<dbReference type="FunCoup" id="Q58194">
    <property type="interactions" value="90"/>
</dbReference>
<dbReference type="STRING" id="243232.MJ_0784"/>
<dbReference type="PaxDb" id="243232-MJ_0784"/>
<dbReference type="EnsemblBacteria" id="AAB98781">
    <property type="protein sequence ID" value="AAB98781"/>
    <property type="gene ID" value="MJ_0784"/>
</dbReference>
<dbReference type="GeneID" id="1451662"/>
<dbReference type="KEGG" id="mja:MJ_0784"/>
<dbReference type="eggNOG" id="arCOG03196">
    <property type="taxonomic scope" value="Archaea"/>
</dbReference>
<dbReference type="HOGENOM" id="CLU_772960_0_0_2"/>
<dbReference type="InParanoid" id="Q58194"/>
<dbReference type="OrthoDB" id="113982at2157"/>
<dbReference type="PhylomeDB" id="Q58194"/>
<dbReference type="BRENDA" id="1.12.98.2">
    <property type="organism ID" value="3260"/>
</dbReference>
<dbReference type="UniPathway" id="UPA00640">
    <property type="reaction ID" value="UER00696"/>
</dbReference>
<dbReference type="EvolutionaryTrace" id="Q58194"/>
<dbReference type="Proteomes" id="UP000000805">
    <property type="component" value="Chromosome"/>
</dbReference>
<dbReference type="GO" id="GO:0047068">
    <property type="term" value="F:N5,N10-methenyltetrahydromethanopterin hydrogenase activity"/>
    <property type="evidence" value="ECO:0007669"/>
    <property type="project" value="UniProtKB-UniRule"/>
</dbReference>
<dbReference type="GO" id="GO:0004735">
    <property type="term" value="F:pyrroline-5-carboxylate reductase activity"/>
    <property type="evidence" value="ECO:0000318"/>
    <property type="project" value="GO_Central"/>
</dbReference>
<dbReference type="GO" id="GO:0055129">
    <property type="term" value="P:L-proline biosynthetic process"/>
    <property type="evidence" value="ECO:0000318"/>
    <property type="project" value="GO_Central"/>
</dbReference>
<dbReference type="GO" id="GO:0019386">
    <property type="term" value="P:methanogenesis, from carbon dioxide"/>
    <property type="evidence" value="ECO:0007669"/>
    <property type="project" value="UniProtKB-UniRule"/>
</dbReference>
<dbReference type="GO" id="GO:0006730">
    <property type="term" value="P:one-carbon metabolic process"/>
    <property type="evidence" value="ECO:0007669"/>
    <property type="project" value="UniProtKB-UniRule"/>
</dbReference>
<dbReference type="Gene3D" id="1.20.120.1300">
    <property type="entry name" value="Hmd, C-terminal helical subdomain"/>
    <property type="match status" value="1"/>
</dbReference>
<dbReference type="Gene3D" id="3.40.50.720">
    <property type="entry name" value="NAD(P)-binding Rossmann-like Domain"/>
    <property type="match status" value="1"/>
</dbReference>
<dbReference type="HAMAP" id="MF_01090">
    <property type="entry name" value="HMD"/>
    <property type="match status" value="1"/>
</dbReference>
<dbReference type="InterPro" id="IPR008927">
    <property type="entry name" value="6-PGluconate_DH-like_C_sf"/>
</dbReference>
<dbReference type="InterPro" id="IPR010062">
    <property type="entry name" value="HMD"/>
</dbReference>
<dbReference type="InterPro" id="IPR004889">
    <property type="entry name" value="HMD_C"/>
</dbReference>
<dbReference type="InterPro" id="IPR038182">
    <property type="entry name" value="HMD_C_sf"/>
</dbReference>
<dbReference type="InterPro" id="IPR055205">
    <property type="entry name" value="HMD_N"/>
</dbReference>
<dbReference type="InterPro" id="IPR024190">
    <property type="entry name" value="METHMP_Hmd"/>
</dbReference>
<dbReference type="InterPro" id="IPR036291">
    <property type="entry name" value="NAD(P)-bd_dom_sf"/>
</dbReference>
<dbReference type="NCBIfam" id="TIGR01723">
    <property type="entry name" value="hmd_TIGR"/>
    <property type="match status" value="1"/>
</dbReference>
<dbReference type="PANTHER" id="PTHR11645">
    <property type="entry name" value="PYRROLINE-5-CARBOXYLATE REDUCTASE"/>
    <property type="match status" value="1"/>
</dbReference>
<dbReference type="PANTHER" id="PTHR11645:SF0">
    <property type="entry name" value="PYRROLINE-5-CARBOXYLATE REDUCTASE 3"/>
    <property type="match status" value="1"/>
</dbReference>
<dbReference type="Pfam" id="PF03201">
    <property type="entry name" value="HMD"/>
    <property type="match status" value="1"/>
</dbReference>
<dbReference type="Pfam" id="PF22616">
    <property type="entry name" value="HMD_N"/>
    <property type="match status" value="1"/>
</dbReference>
<dbReference type="PIRSF" id="PIRSF016158">
    <property type="entry name" value="HMD"/>
    <property type="match status" value="1"/>
</dbReference>
<dbReference type="PIRSF" id="PIRSF500165">
    <property type="entry name" value="HMDI"/>
    <property type="match status" value="1"/>
</dbReference>
<dbReference type="SUPFAM" id="SSF48179">
    <property type="entry name" value="6-phosphogluconate dehydrogenase C-terminal domain-like"/>
    <property type="match status" value="1"/>
</dbReference>
<dbReference type="SUPFAM" id="SSF51735">
    <property type="entry name" value="NAD(P)-binding Rossmann-fold domains"/>
    <property type="match status" value="1"/>
</dbReference>
<organism>
    <name type="scientific">Methanocaldococcus jannaschii (strain ATCC 43067 / DSM 2661 / JAL-1 / JCM 10045 / NBRC 100440)</name>
    <name type="common">Methanococcus jannaschii</name>
    <dbReference type="NCBI Taxonomy" id="243232"/>
    <lineage>
        <taxon>Archaea</taxon>
        <taxon>Methanobacteriati</taxon>
        <taxon>Methanobacteriota</taxon>
        <taxon>Methanomada group</taxon>
        <taxon>Methanococci</taxon>
        <taxon>Methanococcales</taxon>
        <taxon>Methanocaldococcaceae</taxon>
        <taxon>Methanocaldococcus</taxon>
    </lineage>
</organism>
<evidence type="ECO:0000250" key="1"/>
<evidence type="ECO:0000305" key="2"/>
<evidence type="ECO:0007829" key="3">
    <source>
        <dbReference type="PDB" id="2B0J"/>
    </source>
</evidence>
<evidence type="ECO:0007829" key="4">
    <source>
        <dbReference type="PDB" id="3DAF"/>
    </source>
</evidence>
<sequence length="358" mass="38689">MKIAILGAGCYRTHAAAGITNFMRACEVAKEVGKPEIALTHSSITYGAELLHLVPDVKEVIVSDPCFAEEPGLVVIDEFDPKEVMEAHLSGNPESIMPKIREVVKAKAKELPKPPKACIHLVHPEDVGLKVTSDDREAVEGADIVITWLPKGNKQPDIIKKFADAIPEGAIVTHACTIPTTKFAKIFKDLGREDLNITSYHPGCVPEMKGQVYIAEGYASEEAVNKLYEIGKIARGKAFKMPANLIGPVCDMCSAVTATVYAGLLAYRDAVTKILGAPADFAQMMADEALTQIHNLMKEKGIANMEEALDPAALLGTADSMCFGPLAEILPTALKVLEKHKVVEEEGKTKCEIMSQKE</sequence>
<proteinExistence type="evidence at protein level"/>
<keyword id="KW-0002">3D-structure</keyword>
<keyword id="KW-0484">Methanogenesis</keyword>
<keyword id="KW-0554">One-carbon metabolism</keyword>
<keyword id="KW-0560">Oxidoreductase</keyword>
<keyword id="KW-1185">Reference proteome</keyword>